<reference key="1">
    <citation type="journal article" date="2000" name="Genome">
        <title>Gene content and organization of a 281-kbp contig from the genome of the extremely thermophilic archaeon, Sulfolobus solfataricus P2.</title>
        <authorList>
            <person name="Charlebois R.L."/>
            <person name="Singh R.K."/>
            <person name="Chan-Weiher C.C.-Y."/>
            <person name="Allard G."/>
            <person name="Chow C."/>
            <person name="Confalonieri F."/>
            <person name="Curtis B."/>
            <person name="Duguet M."/>
            <person name="Erauso G."/>
            <person name="Faguy D."/>
            <person name="Gaasterland T."/>
            <person name="Garrett R.A."/>
            <person name="Gordon P."/>
            <person name="Jeffries A.C."/>
            <person name="Kozera C."/>
            <person name="Kushwaha N."/>
            <person name="Lafleur E."/>
            <person name="Medina N."/>
            <person name="Peng X."/>
            <person name="Penny S.L."/>
            <person name="She Q."/>
            <person name="St Jean A."/>
            <person name="van der Oost J."/>
            <person name="Young F."/>
            <person name="Zivanovic Y."/>
            <person name="Doolittle W.F."/>
            <person name="Ragan M.A."/>
            <person name="Sensen C.W."/>
        </authorList>
    </citation>
    <scope>NUCLEOTIDE SEQUENCE [LARGE SCALE GENOMIC DNA]</scope>
    <source>
        <strain>ATCC 35092 / DSM 1617 / JCM 11322 / P2</strain>
    </source>
</reference>
<reference key="2">
    <citation type="journal article" date="2001" name="Proc. Natl. Acad. Sci. U.S.A.">
        <title>The complete genome of the crenarchaeon Sulfolobus solfataricus P2.</title>
        <authorList>
            <person name="She Q."/>
            <person name="Singh R.K."/>
            <person name="Confalonieri F."/>
            <person name="Zivanovic Y."/>
            <person name="Allard G."/>
            <person name="Awayez M.J."/>
            <person name="Chan-Weiher C.C.-Y."/>
            <person name="Clausen I.G."/>
            <person name="Curtis B.A."/>
            <person name="De Moors A."/>
            <person name="Erauso G."/>
            <person name="Fletcher C."/>
            <person name="Gordon P.M.K."/>
            <person name="Heikamp-de Jong I."/>
            <person name="Jeffries A.C."/>
            <person name="Kozera C.J."/>
            <person name="Medina N."/>
            <person name="Peng X."/>
            <person name="Thi-Ngoc H.P."/>
            <person name="Redder P."/>
            <person name="Schenk M.E."/>
            <person name="Theriault C."/>
            <person name="Tolstrup N."/>
            <person name="Charlebois R.L."/>
            <person name="Doolittle W.F."/>
            <person name="Duguet M."/>
            <person name="Gaasterland T."/>
            <person name="Garrett R.A."/>
            <person name="Ragan M.A."/>
            <person name="Sensen C.W."/>
            <person name="Van der Oost J."/>
        </authorList>
    </citation>
    <scope>NUCLEOTIDE SEQUENCE [LARGE SCALE GENOMIC DNA]</scope>
    <source>
        <strain>ATCC 35092 / DSM 1617 / JCM 11322 / P2</strain>
    </source>
</reference>
<feature type="chain" id="PRO_0000094180" description="CDP-archaeol synthase">
    <location>
        <begin position="1"/>
        <end position="166"/>
    </location>
</feature>
<feature type="transmembrane region" description="Helical" evidence="1">
    <location>
        <begin position="7"/>
        <end position="27"/>
    </location>
</feature>
<feature type="transmembrane region" description="Helical" evidence="1">
    <location>
        <begin position="55"/>
        <end position="75"/>
    </location>
</feature>
<feature type="transmembrane region" description="Helical" evidence="1">
    <location>
        <begin position="78"/>
        <end position="98"/>
    </location>
</feature>
<feature type="transmembrane region" description="Helical" evidence="1">
    <location>
        <begin position="116"/>
        <end position="136"/>
    </location>
</feature>
<feature type="transmembrane region" description="Helical" evidence="1">
    <location>
        <begin position="138"/>
        <end position="158"/>
    </location>
</feature>
<protein>
    <recommendedName>
        <fullName evidence="1">CDP-archaeol synthase</fullName>
        <ecNumber evidence="1">2.7.7.67</ecNumber>
    </recommendedName>
    <alternativeName>
        <fullName evidence="1">CDP-2,3-bis-(O-geranylgeranyl)-sn-glycerol synthase</fullName>
    </alternativeName>
</protein>
<dbReference type="EC" id="2.7.7.67" evidence="1"/>
<dbReference type="EMBL" id="Y18930">
    <property type="protein sequence ID" value="CAB57527.1"/>
    <property type="molecule type" value="Genomic_DNA"/>
</dbReference>
<dbReference type="EMBL" id="AE006641">
    <property type="protein sequence ID" value="AAK41073.1"/>
    <property type="molecule type" value="Genomic_DNA"/>
</dbReference>
<dbReference type="PIR" id="B99227">
    <property type="entry name" value="B99227"/>
</dbReference>
<dbReference type="RefSeq" id="WP_010923068.1">
    <property type="nucleotide sequence ID" value="NC_002754.1"/>
</dbReference>
<dbReference type="SMR" id="Q9UXG3"/>
<dbReference type="STRING" id="273057.SSO0776"/>
<dbReference type="PaxDb" id="273057-SSO0776"/>
<dbReference type="EnsemblBacteria" id="AAK41073">
    <property type="protein sequence ID" value="AAK41073"/>
    <property type="gene ID" value="SSO0776"/>
</dbReference>
<dbReference type="KEGG" id="sso:SSO0776"/>
<dbReference type="PATRIC" id="fig|273057.12.peg.777"/>
<dbReference type="eggNOG" id="arCOG04106">
    <property type="taxonomic scope" value="Archaea"/>
</dbReference>
<dbReference type="HOGENOM" id="CLU_105710_0_0_2"/>
<dbReference type="InParanoid" id="Q9UXG3"/>
<dbReference type="PhylomeDB" id="Q9UXG3"/>
<dbReference type="UniPathway" id="UPA00940"/>
<dbReference type="Proteomes" id="UP000001974">
    <property type="component" value="Chromosome"/>
</dbReference>
<dbReference type="GO" id="GO:0005886">
    <property type="term" value="C:plasma membrane"/>
    <property type="evidence" value="ECO:0007669"/>
    <property type="project" value="UniProtKB-SubCell"/>
</dbReference>
<dbReference type="GO" id="GO:0043338">
    <property type="term" value="F:CDP-2,3-bis-(O-geranylgeranyl)-sn-glycerol synthase activity"/>
    <property type="evidence" value="ECO:0007669"/>
    <property type="project" value="UniProtKB-EC"/>
</dbReference>
<dbReference type="GO" id="GO:0046474">
    <property type="term" value="P:glycerophospholipid biosynthetic process"/>
    <property type="evidence" value="ECO:0007669"/>
    <property type="project" value="UniProtKB-UniRule"/>
</dbReference>
<dbReference type="HAMAP" id="MF_01117">
    <property type="entry name" value="CDP_archaeol_synth"/>
    <property type="match status" value="1"/>
</dbReference>
<dbReference type="InterPro" id="IPR032690">
    <property type="entry name" value="CarS"/>
</dbReference>
<dbReference type="InterPro" id="IPR002726">
    <property type="entry name" value="CarS_archaea"/>
</dbReference>
<dbReference type="NCBIfam" id="NF003114">
    <property type="entry name" value="PRK04032.1"/>
    <property type="match status" value="1"/>
</dbReference>
<dbReference type="PANTHER" id="PTHR39650">
    <property type="entry name" value="CDP-ARCHAEOL SYNTHASE"/>
    <property type="match status" value="1"/>
</dbReference>
<dbReference type="PANTHER" id="PTHR39650:SF1">
    <property type="entry name" value="CDP-ARCHAEOL SYNTHASE"/>
    <property type="match status" value="1"/>
</dbReference>
<dbReference type="Pfam" id="PF01864">
    <property type="entry name" value="CarS-like"/>
    <property type="match status" value="1"/>
</dbReference>
<proteinExistence type="inferred from homology"/>
<accession>Q9UXG3</accession>
<sequence>MSIAYDLLLSILIYLPAFVANGSGPFIKRGTPIDFGKNFVDGRRLFGDGKTFEGLIVALTFGTTVGVIISKFFTAEWTLISFLESLFAMIGDMIGAFIKRRLGIPRGGRVLGLDQLDFVLGASLILVLMRVNITWYQFLFICGLAFFLHQGTNYVAYLLKIKNVPW</sequence>
<gene>
    <name evidence="1" type="primary">carS</name>
    <name type="ordered locus">SSO0776</name>
    <name type="ORF">C40_012</name>
</gene>
<organism>
    <name type="scientific">Saccharolobus solfataricus (strain ATCC 35092 / DSM 1617 / JCM 11322 / P2)</name>
    <name type="common">Sulfolobus solfataricus</name>
    <dbReference type="NCBI Taxonomy" id="273057"/>
    <lineage>
        <taxon>Archaea</taxon>
        <taxon>Thermoproteota</taxon>
        <taxon>Thermoprotei</taxon>
        <taxon>Sulfolobales</taxon>
        <taxon>Sulfolobaceae</taxon>
        <taxon>Saccharolobus</taxon>
    </lineage>
</organism>
<keyword id="KW-1003">Cell membrane</keyword>
<keyword id="KW-0444">Lipid biosynthesis</keyword>
<keyword id="KW-0443">Lipid metabolism</keyword>
<keyword id="KW-0460">Magnesium</keyword>
<keyword id="KW-0472">Membrane</keyword>
<keyword id="KW-0594">Phospholipid biosynthesis</keyword>
<keyword id="KW-1208">Phospholipid metabolism</keyword>
<keyword id="KW-1185">Reference proteome</keyword>
<keyword id="KW-0808">Transferase</keyword>
<keyword id="KW-0812">Transmembrane</keyword>
<keyword id="KW-1133">Transmembrane helix</keyword>
<evidence type="ECO:0000255" key="1">
    <source>
        <dbReference type="HAMAP-Rule" id="MF_01117"/>
    </source>
</evidence>
<name>CDPAS_SACS2</name>
<comment type="function">
    <text evidence="1">Catalyzes the formation of CDP-2,3-bis-(O-geranylgeranyl)-sn-glycerol (CDP-archaeol) from 2,3-bis-(O-geranylgeranyl)-sn-glycerol 1-phosphate (DGGGP) and CTP. This reaction is the third ether-bond-formation step in the biosynthesis of archaeal membrane lipids.</text>
</comment>
<comment type="catalytic activity">
    <reaction evidence="1">
        <text>2,3-bis-O-(geranylgeranyl)-sn-glycerol 1-phosphate + CTP + H(+) = CDP-2,3-bis-O-(geranylgeranyl)-sn-glycerol + diphosphate</text>
        <dbReference type="Rhea" id="RHEA:25690"/>
        <dbReference type="ChEBI" id="CHEBI:15378"/>
        <dbReference type="ChEBI" id="CHEBI:33019"/>
        <dbReference type="ChEBI" id="CHEBI:37563"/>
        <dbReference type="ChEBI" id="CHEBI:58837"/>
        <dbReference type="ChEBI" id="CHEBI:58838"/>
        <dbReference type="EC" id="2.7.7.67"/>
    </reaction>
</comment>
<comment type="cofactor">
    <cofactor evidence="1">
        <name>Mg(2+)</name>
        <dbReference type="ChEBI" id="CHEBI:18420"/>
    </cofactor>
</comment>
<comment type="pathway">
    <text evidence="1">Membrane lipid metabolism; glycerophospholipid metabolism.</text>
</comment>
<comment type="subcellular location">
    <subcellularLocation>
        <location evidence="1">Cell membrane</location>
        <topology evidence="1">Multi-pass membrane protein</topology>
    </subcellularLocation>
</comment>
<comment type="similarity">
    <text evidence="1">Belongs to the CDP-archaeol synthase family.</text>
</comment>